<evidence type="ECO:0000255" key="1">
    <source>
        <dbReference type="HAMAP-Rule" id="MF_00056"/>
    </source>
</evidence>
<evidence type="ECO:0007829" key="2">
    <source>
        <dbReference type="PDB" id="3TML"/>
    </source>
</evidence>
<feature type="chain" id="PRO_1000091801" description="2-dehydro-3-deoxyphosphooctonate aldolase">
    <location>
        <begin position="1"/>
        <end position="284"/>
    </location>
</feature>
<feature type="strand" evidence="2">
    <location>
        <begin position="1"/>
        <end position="3"/>
    </location>
</feature>
<feature type="strand" evidence="2">
    <location>
        <begin position="6"/>
        <end position="9"/>
    </location>
</feature>
<feature type="strand" evidence="2">
    <location>
        <begin position="15"/>
        <end position="19"/>
    </location>
</feature>
<feature type="helix" evidence="2">
    <location>
        <begin position="26"/>
        <end position="43"/>
    </location>
</feature>
<feature type="strand" evidence="2">
    <location>
        <begin position="47"/>
        <end position="50"/>
    </location>
</feature>
<feature type="helix" evidence="2">
    <location>
        <begin position="69"/>
        <end position="83"/>
    </location>
</feature>
<feature type="strand" evidence="2">
    <location>
        <begin position="87"/>
        <end position="90"/>
    </location>
</feature>
<feature type="helix" evidence="2">
    <location>
        <begin position="94"/>
        <end position="96"/>
    </location>
</feature>
<feature type="helix" evidence="2">
    <location>
        <begin position="97"/>
        <end position="103"/>
    </location>
</feature>
<feature type="strand" evidence="2">
    <location>
        <begin position="105"/>
        <end position="109"/>
    </location>
</feature>
<feature type="helix" evidence="2">
    <location>
        <begin position="111"/>
        <end position="113"/>
    </location>
</feature>
<feature type="helix" evidence="2">
    <location>
        <begin position="117"/>
        <end position="124"/>
    </location>
</feature>
<feature type="strand" evidence="2">
    <location>
        <begin position="126"/>
        <end position="128"/>
    </location>
</feature>
<feature type="strand" evidence="2">
    <location>
        <begin position="130"/>
        <end position="133"/>
    </location>
</feature>
<feature type="helix" evidence="2">
    <location>
        <begin position="140"/>
        <end position="142"/>
    </location>
</feature>
<feature type="helix" evidence="2">
    <location>
        <begin position="143"/>
        <end position="155"/>
    </location>
</feature>
<feature type="turn" evidence="2">
    <location>
        <begin position="156"/>
        <end position="158"/>
    </location>
</feature>
<feature type="strand" evidence="2">
    <location>
        <begin position="164"/>
        <end position="168"/>
    </location>
</feature>
<feature type="strand" evidence="2">
    <location>
        <begin position="174"/>
        <end position="176"/>
    </location>
</feature>
<feature type="helix" evidence="2">
    <location>
        <begin position="182"/>
        <end position="187"/>
    </location>
</feature>
<feature type="helix" evidence="2">
    <location>
        <begin position="188"/>
        <end position="191"/>
    </location>
</feature>
<feature type="strand" evidence="2">
    <location>
        <begin position="195"/>
        <end position="198"/>
    </location>
</feature>
<feature type="helix" evidence="2">
    <location>
        <begin position="199"/>
        <end position="202"/>
    </location>
</feature>
<feature type="helix" evidence="2">
    <location>
        <begin position="219"/>
        <end position="230"/>
    </location>
</feature>
<feature type="strand" evidence="2">
    <location>
        <begin position="233"/>
        <end position="242"/>
    </location>
</feature>
<feature type="helix" evidence="2">
    <location>
        <begin position="243"/>
        <end position="245"/>
    </location>
</feature>
<feature type="helix" evidence="2">
    <location>
        <begin position="250"/>
        <end position="252"/>
    </location>
</feature>
<feature type="helix" evidence="2">
    <location>
        <begin position="256"/>
        <end position="258"/>
    </location>
</feature>
<feature type="helix" evidence="2">
    <location>
        <begin position="259"/>
        <end position="274"/>
    </location>
</feature>
<feature type="helix" evidence="2">
    <location>
        <begin position="279"/>
        <end position="282"/>
    </location>
</feature>
<accession>B4EDA2</accession>
<proteinExistence type="evidence at protein level"/>
<comment type="catalytic activity">
    <reaction evidence="1">
        <text>D-arabinose 5-phosphate + phosphoenolpyruvate + H2O = 3-deoxy-alpha-D-manno-2-octulosonate-8-phosphate + phosphate</text>
        <dbReference type="Rhea" id="RHEA:14053"/>
        <dbReference type="ChEBI" id="CHEBI:15377"/>
        <dbReference type="ChEBI" id="CHEBI:43474"/>
        <dbReference type="ChEBI" id="CHEBI:57693"/>
        <dbReference type="ChEBI" id="CHEBI:58702"/>
        <dbReference type="ChEBI" id="CHEBI:85985"/>
        <dbReference type="EC" id="2.5.1.55"/>
    </reaction>
</comment>
<comment type="pathway">
    <text evidence="1">Carbohydrate biosynthesis; 3-deoxy-D-manno-octulosonate biosynthesis; 3-deoxy-D-manno-octulosonate from D-ribulose 5-phosphate: step 2/3.</text>
</comment>
<comment type="pathway">
    <text evidence="1">Bacterial outer membrane biogenesis; lipopolysaccharide biosynthesis.</text>
</comment>
<comment type="subcellular location">
    <subcellularLocation>
        <location evidence="1">Cytoplasm</location>
    </subcellularLocation>
</comment>
<comment type="similarity">
    <text evidence="1">Belongs to the KdsA family.</text>
</comment>
<gene>
    <name evidence="1" type="primary">kdsA</name>
    <name type="ordered locus">BceJ2315_21430</name>
    <name type="ORF">BCAL2180</name>
</gene>
<name>KDSA_BURCJ</name>
<organism>
    <name type="scientific">Burkholderia cenocepacia (strain ATCC BAA-245 / DSM 16553 / LMG 16656 / NCTC 13227 / J2315 / CF5610)</name>
    <name type="common">Burkholderia cepacia (strain J2315)</name>
    <dbReference type="NCBI Taxonomy" id="216591"/>
    <lineage>
        <taxon>Bacteria</taxon>
        <taxon>Pseudomonadati</taxon>
        <taxon>Pseudomonadota</taxon>
        <taxon>Betaproteobacteria</taxon>
        <taxon>Burkholderiales</taxon>
        <taxon>Burkholderiaceae</taxon>
        <taxon>Burkholderia</taxon>
        <taxon>Burkholderia cepacia complex</taxon>
    </lineage>
</organism>
<dbReference type="EC" id="2.5.1.55" evidence="1"/>
<dbReference type="EMBL" id="AM747720">
    <property type="protein sequence ID" value="CAR52481.1"/>
    <property type="molecule type" value="Genomic_DNA"/>
</dbReference>
<dbReference type="RefSeq" id="WP_006485302.1">
    <property type="nucleotide sequence ID" value="NC_011000.1"/>
</dbReference>
<dbReference type="PDB" id="3TML">
    <property type="method" value="X-ray"/>
    <property type="resolution" value="1.90 A"/>
    <property type="chains" value="A/B/C/D=1-284"/>
</dbReference>
<dbReference type="PDBsum" id="3TML"/>
<dbReference type="SMR" id="B4EDA2"/>
<dbReference type="GeneID" id="56558678"/>
<dbReference type="KEGG" id="bcj:BCAL2180"/>
<dbReference type="eggNOG" id="COG2877">
    <property type="taxonomic scope" value="Bacteria"/>
</dbReference>
<dbReference type="HOGENOM" id="CLU_036666_0_0_4"/>
<dbReference type="BioCyc" id="BCEN216591:G1G1V-2395-MONOMER"/>
<dbReference type="UniPathway" id="UPA00030"/>
<dbReference type="UniPathway" id="UPA00357">
    <property type="reaction ID" value="UER00474"/>
</dbReference>
<dbReference type="EvolutionaryTrace" id="B4EDA2"/>
<dbReference type="Proteomes" id="UP000001035">
    <property type="component" value="Chromosome 1"/>
</dbReference>
<dbReference type="GO" id="GO:0005737">
    <property type="term" value="C:cytoplasm"/>
    <property type="evidence" value="ECO:0007669"/>
    <property type="project" value="UniProtKB-SubCell"/>
</dbReference>
<dbReference type="GO" id="GO:0008676">
    <property type="term" value="F:3-deoxy-8-phosphooctulonate synthase activity"/>
    <property type="evidence" value="ECO:0007669"/>
    <property type="project" value="UniProtKB-UniRule"/>
</dbReference>
<dbReference type="GO" id="GO:0019294">
    <property type="term" value="P:keto-3-deoxy-D-manno-octulosonic acid biosynthetic process"/>
    <property type="evidence" value="ECO:0007669"/>
    <property type="project" value="UniProtKB-UniRule"/>
</dbReference>
<dbReference type="Gene3D" id="3.20.20.70">
    <property type="entry name" value="Aldolase class I"/>
    <property type="match status" value="1"/>
</dbReference>
<dbReference type="HAMAP" id="MF_00056">
    <property type="entry name" value="KDO8P_synth"/>
    <property type="match status" value="1"/>
</dbReference>
<dbReference type="InterPro" id="IPR013785">
    <property type="entry name" value="Aldolase_TIM"/>
</dbReference>
<dbReference type="InterPro" id="IPR006218">
    <property type="entry name" value="DAHP1/KDSA"/>
</dbReference>
<dbReference type="InterPro" id="IPR006269">
    <property type="entry name" value="KDO8P_synthase"/>
</dbReference>
<dbReference type="NCBIfam" id="TIGR01362">
    <property type="entry name" value="KDO8P_synth"/>
    <property type="match status" value="1"/>
</dbReference>
<dbReference type="NCBIfam" id="NF003543">
    <property type="entry name" value="PRK05198.1"/>
    <property type="match status" value="1"/>
</dbReference>
<dbReference type="PANTHER" id="PTHR21057">
    <property type="entry name" value="PHOSPHO-2-DEHYDRO-3-DEOXYHEPTONATE ALDOLASE"/>
    <property type="match status" value="1"/>
</dbReference>
<dbReference type="Pfam" id="PF00793">
    <property type="entry name" value="DAHP_synth_1"/>
    <property type="match status" value="1"/>
</dbReference>
<dbReference type="SUPFAM" id="SSF51569">
    <property type="entry name" value="Aldolase"/>
    <property type="match status" value="1"/>
</dbReference>
<keyword id="KW-0002">3D-structure</keyword>
<keyword id="KW-0963">Cytoplasm</keyword>
<keyword id="KW-0448">Lipopolysaccharide biosynthesis</keyword>
<keyword id="KW-0808">Transferase</keyword>
<sequence>MKLCDFEVGLDQPFFLIAGTCVVESEQMTIDTAGRLKEICEKLNVPFIYKSSYDKANRSSGKSFRGLGMDEGLRILSEVKRQLGLPVLTDVHSIDEIEQVASVVDVLQTPAFLCRQTDFIHACARSGKPVNIKKGQFLAPHDMKNVIDKARDAAREAGLSEDRFMACERGVSFGYNNLVSDMRSLAIMRETNAPVVFDATHSVQLPGGQGTSSGGQREFVPVLARAAVATGVAGLFMETHPNPAEAKSDGPNAVPLNRMGALLETLVTLDQAVKRNPFLENDFN</sequence>
<reference key="1">
    <citation type="journal article" date="2009" name="J. Bacteriol.">
        <title>The genome of Burkholderia cenocepacia J2315, an epidemic pathogen of cystic fibrosis patients.</title>
        <authorList>
            <person name="Holden M.T."/>
            <person name="Seth-Smith H.M."/>
            <person name="Crossman L.C."/>
            <person name="Sebaihia M."/>
            <person name="Bentley S.D."/>
            <person name="Cerdeno-Tarraga A.M."/>
            <person name="Thomson N.R."/>
            <person name="Bason N."/>
            <person name="Quail M.A."/>
            <person name="Sharp S."/>
            <person name="Cherevach I."/>
            <person name="Churcher C."/>
            <person name="Goodhead I."/>
            <person name="Hauser H."/>
            <person name="Holroyd N."/>
            <person name="Mungall K."/>
            <person name="Scott P."/>
            <person name="Walker D."/>
            <person name="White B."/>
            <person name="Rose H."/>
            <person name="Iversen P."/>
            <person name="Mil-Homens D."/>
            <person name="Rocha E.P."/>
            <person name="Fialho A.M."/>
            <person name="Baldwin A."/>
            <person name="Dowson C."/>
            <person name="Barrell B.G."/>
            <person name="Govan J.R."/>
            <person name="Vandamme P."/>
            <person name="Hart C.A."/>
            <person name="Mahenthiralingam E."/>
            <person name="Parkhill J."/>
        </authorList>
    </citation>
    <scope>NUCLEOTIDE SEQUENCE [LARGE SCALE GENOMIC DNA]</scope>
    <source>
        <strain>ATCC BAA-245 / DSM 16553 / LMG 16656 / NCTC 13227 / J2315 / CF5610</strain>
    </source>
</reference>
<protein>
    <recommendedName>
        <fullName evidence="1">2-dehydro-3-deoxyphosphooctonate aldolase</fullName>
        <ecNumber evidence="1">2.5.1.55</ecNumber>
    </recommendedName>
    <alternativeName>
        <fullName evidence="1">3-deoxy-D-manno-octulosonic acid 8-phosphate synthase</fullName>
    </alternativeName>
    <alternativeName>
        <fullName evidence="1">KDO-8-phosphate synthase</fullName>
        <shortName evidence="1">KDO 8-P synthase</shortName>
        <shortName evidence="1">KDOPS</shortName>
    </alternativeName>
    <alternativeName>
        <fullName evidence="1">Phospho-2-dehydro-3-deoxyoctonate aldolase</fullName>
    </alternativeName>
</protein>